<name>RR4_ALOVE</name>
<feature type="chain" id="PRO_0000132529" description="Small ribosomal subunit protein uS4c">
    <location>
        <begin position="1" status="less than"/>
        <end position="182" status="greater than"/>
    </location>
</feature>
<feature type="domain" description="S4 RNA-binding">
    <location>
        <begin position="82"/>
        <end position="143"/>
    </location>
</feature>
<feature type="non-terminal residue">
    <location>
        <position position="1"/>
    </location>
</feature>
<feature type="non-terminal residue">
    <location>
        <position position="182"/>
    </location>
</feature>
<reference key="1">
    <citation type="journal article" date="1997" name="Plant Syst. Evol.">
        <title>Phylogenetic analysis of Iridaceae with parsimony and distance methods using the plastid gene rps4.</title>
        <authorList>
            <person name="Souza-Chies T.T."/>
            <person name="Bittar G."/>
            <person name="Nadot S."/>
            <person name="Carter L."/>
            <person name="Besin E."/>
            <person name="Lejeune B.P."/>
        </authorList>
    </citation>
    <scope>NUCLEOTIDE SEQUENCE [GENOMIC DNA]</scope>
</reference>
<organism>
    <name type="scientific">Alophia veracruzana</name>
    <name type="common">Mexican pine woods lily</name>
    <dbReference type="NCBI Taxonomy" id="58940"/>
    <lineage>
        <taxon>Eukaryota</taxon>
        <taxon>Viridiplantae</taxon>
        <taxon>Streptophyta</taxon>
        <taxon>Embryophyta</taxon>
        <taxon>Tracheophyta</taxon>
        <taxon>Spermatophyta</taxon>
        <taxon>Magnoliopsida</taxon>
        <taxon>Liliopsida</taxon>
        <taxon>Asparagales</taxon>
        <taxon>Iridaceae</taxon>
        <taxon>Iridoideae</taxon>
        <taxon>Tigridieae</taxon>
        <taxon>Alophia</taxon>
    </lineage>
</organism>
<dbReference type="EMBL" id="Z68231">
    <property type="protein sequence ID" value="CAA92529.1"/>
    <property type="molecule type" value="Genomic_DNA"/>
</dbReference>
<dbReference type="SMR" id="O19986"/>
<dbReference type="GO" id="GO:0009507">
    <property type="term" value="C:chloroplast"/>
    <property type="evidence" value="ECO:0007669"/>
    <property type="project" value="UniProtKB-SubCell"/>
</dbReference>
<dbReference type="GO" id="GO:0015935">
    <property type="term" value="C:small ribosomal subunit"/>
    <property type="evidence" value="ECO:0007669"/>
    <property type="project" value="InterPro"/>
</dbReference>
<dbReference type="GO" id="GO:0019843">
    <property type="term" value="F:rRNA binding"/>
    <property type="evidence" value="ECO:0007669"/>
    <property type="project" value="UniProtKB-KW"/>
</dbReference>
<dbReference type="GO" id="GO:0003735">
    <property type="term" value="F:structural constituent of ribosome"/>
    <property type="evidence" value="ECO:0007669"/>
    <property type="project" value="InterPro"/>
</dbReference>
<dbReference type="GO" id="GO:0042274">
    <property type="term" value="P:ribosomal small subunit biogenesis"/>
    <property type="evidence" value="ECO:0007669"/>
    <property type="project" value="TreeGrafter"/>
</dbReference>
<dbReference type="GO" id="GO:0006412">
    <property type="term" value="P:translation"/>
    <property type="evidence" value="ECO:0007669"/>
    <property type="project" value="InterPro"/>
</dbReference>
<dbReference type="CDD" id="cd00165">
    <property type="entry name" value="S4"/>
    <property type="match status" value="1"/>
</dbReference>
<dbReference type="FunFam" id="1.10.1050.10:FF:000002">
    <property type="entry name" value="30S ribosomal protein S4, chloroplastic"/>
    <property type="match status" value="1"/>
</dbReference>
<dbReference type="FunFam" id="3.10.290.10:FF:000081">
    <property type="entry name" value="30S ribosomal protein S4, chloroplastic"/>
    <property type="match status" value="1"/>
</dbReference>
<dbReference type="Gene3D" id="1.10.1050.10">
    <property type="entry name" value="Ribosomal Protein S4 Delta 41, Chain A, domain 1"/>
    <property type="match status" value="1"/>
</dbReference>
<dbReference type="Gene3D" id="3.10.290.10">
    <property type="entry name" value="RNA-binding S4 domain"/>
    <property type="match status" value="1"/>
</dbReference>
<dbReference type="HAMAP" id="MF_01306_B">
    <property type="entry name" value="Ribosomal_uS4_B"/>
    <property type="match status" value="1"/>
</dbReference>
<dbReference type="InterPro" id="IPR022801">
    <property type="entry name" value="Ribosomal_uS4"/>
</dbReference>
<dbReference type="InterPro" id="IPR005709">
    <property type="entry name" value="Ribosomal_uS4_bac-type"/>
</dbReference>
<dbReference type="InterPro" id="IPR018079">
    <property type="entry name" value="Ribosomal_uS4_CS"/>
</dbReference>
<dbReference type="InterPro" id="IPR001912">
    <property type="entry name" value="Ribosomal_uS4_N"/>
</dbReference>
<dbReference type="InterPro" id="IPR002942">
    <property type="entry name" value="S4_RNA-bd"/>
</dbReference>
<dbReference type="InterPro" id="IPR036986">
    <property type="entry name" value="S4_RNA-bd_sf"/>
</dbReference>
<dbReference type="NCBIfam" id="NF003717">
    <property type="entry name" value="PRK05327.1"/>
    <property type="match status" value="1"/>
</dbReference>
<dbReference type="NCBIfam" id="TIGR01017">
    <property type="entry name" value="rpsD_bact"/>
    <property type="match status" value="1"/>
</dbReference>
<dbReference type="PANTHER" id="PTHR11831">
    <property type="entry name" value="30S 40S RIBOSOMAL PROTEIN"/>
    <property type="match status" value="1"/>
</dbReference>
<dbReference type="PANTHER" id="PTHR11831:SF4">
    <property type="entry name" value="SMALL RIBOSOMAL SUBUNIT PROTEIN US4M"/>
    <property type="match status" value="1"/>
</dbReference>
<dbReference type="Pfam" id="PF00163">
    <property type="entry name" value="Ribosomal_S4"/>
    <property type="match status" value="1"/>
</dbReference>
<dbReference type="Pfam" id="PF01479">
    <property type="entry name" value="S4"/>
    <property type="match status" value="1"/>
</dbReference>
<dbReference type="SMART" id="SM01390">
    <property type="entry name" value="Ribosomal_S4"/>
    <property type="match status" value="1"/>
</dbReference>
<dbReference type="SMART" id="SM00363">
    <property type="entry name" value="S4"/>
    <property type="match status" value="1"/>
</dbReference>
<dbReference type="SUPFAM" id="SSF55174">
    <property type="entry name" value="Alpha-L RNA-binding motif"/>
    <property type="match status" value="1"/>
</dbReference>
<dbReference type="PROSITE" id="PS00632">
    <property type="entry name" value="RIBOSOMAL_S4"/>
    <property type="match status" value="1"/>
</dbReference>
<dbReference type="PROSITE" id="PS50889">
    <property type="entry name" value="S4"/>
    <property type="match status" value="1"/>
</dbReference>
<accession>O19986</accession>
<geneLocation type="chloroplast"/>
<protein>
    <recommendedName>
        <fullName evidence="2">Small ribosomal subunit protein uS4c</fullName>
    </recommendedName>
    <alternativeName>
        <fullName>30S ribosomal protein S4, chloroplastic</fullName>
    </alternativeName>
</protein>
<comment type="function">
    <text evidence="1">One of the primary rRNA binding proteins, it binds directly to 16S rRNA where it nucleates assembly of the body of the 30S subunit.</text>
</comment>
<comment type="function">
    <text evidence="1">With S5 and S12 plays an important role in translational accuracy.</text>
</comment>
<comment type="subunit">
    <text evidence="1">Part of the 30S ribosomal subunit. Contacts protein S5. The interaction surface between S4 and S5 is involved in control of translational fidelity (By similarity).</text>
</comment>
<comment type="subcellular location">
    <subcellularLocation>
        <location>Plastid</location>
        <location>Chloroplast</location>
    </subcellularLocation>
</comment>
<comment type="similarity">
    <text evidence="2">Belongs to the universal ribosomal protein uS4 family.</text>
</comment>
<sequence length="182" mass="20988">RFKKIRRLGALPGLTSKRPRSGIDLKNQLRSGKRSQYRIRLEEKQKLRFHYGLTERQLLKYVHIAGKAKGSTGQVLLQLLEMRLDNILFRLGMASTIPGARQLVNHRHILVNGRIVDIPSYRCKPRDIITTKDKERSKVLIQNYIASSPHAELPNHLIIDPLQYKGLVNQIIDSKWIGLKIN</sequence>
<evidence type="ECO:0000250" key="1"/>
<evidence type="ECO:0000305" key="2"/>
<gene>
    <name type="primary">rps4</name>
</gene>
<proteinExistence type="inferred from homology"/>
<keyword id="KW-0150">Chloroplast</keyword>
<keyword id="KW-0934">Plastid</keyword>
<keyword id="KW-0687">Ribonucleoprotein</keyword>
<keyword id="KW-0689">Ribosomal protein</keyword>
<keyword id="KW-0694">RNA-binding</keyword>
<keyword id="KW-0699">rRNA-binding</keyword>